<dbReference type="PIR" id="A02287">
    <property type="entry name" value="HADN"/>
</dbReference>
<dbReference type="SMR" id="P01964"/>
<dbReference type="HOGENOM" id="CLU_003827_10_2_1"/>
<dbReference type="OMA" id="MFTSFPT"/>
<dbReference type="GO" id="GO:0072562">
    <property type="term" value="C:blood microparticle"/>
    <property type="evidence" value="ECO:0007669"/>
    <property type="project" value="TreeGrafter"/>
</dbReference>
<dbReference type="GO" id="GO:0031838">
    <property type="term" value="C:haptoglobin-hemoglobin complex"/>
    <property type="evidence" value="ECO:0007669"/>
    <property type="project" value="TreeGrafter"/>
</dbReference>
<dbReference type="GO" id="GO:0005833">
    <property type="term" value="C:hemoglobin complex"/>
    <property type="evidence" value="ECO:0007669"/>
    <property type="project" value="InterPro"/>
</dbReference>
<dbReference type="GO" id="GO:0031720">
    <property type="term" value="F:haptoglobin binding"/>
    <property type="evidence" value="ECO:0007669"/>
    <property type="project" value="TreeGrafter"/>
</dbReference>
<dbReference type="GO" id="GO:0020037">
    <property type="term" value="F:heme binding"/>
    <property type="evidence" value="ECO:0007669"/>
    <property type="project" value="InterPro"/>
</dbReference>
<dbReference type="GO" id="GO:0005506">
    <property type="term" value="F:iron ion binding"/>
    <property type="evidence" value="ECO:0007669"/>
    <property type="project" value="InterPro"/>
</dbReference>
<dbReference type="GO" id="GO:0043177">
    <property type="term" value="F:organic acid binding"/>
    <property type="evidence" value="ECO:0007669"/>
    <property type="project" value="TreeGrafter"/>
</dbReference>
<dbReference type="GO" id="GO:0019825">
    <property type="term" value="F:oxygen binding"/>
    <property type="evidence" value="ECO:0007669"/>
    <property type="project" value="InterPro"/>
</dbReference>
<dbReference type="GO" id="GO:0005344">
    <property type="term" value="F:oxygen carrier activity"/>
    <property type="evidence" value="ECO:0007669"/>
    <property type="project" value="UniProtKB-KW"/>
</dbReference>
<dbReference type="GO" id="GO:0004601">
    <property type="term" value="F:peroxidase activity"/>
    <property type="evidence" value="ECO:0007669"/>
    <property type="project" value="TreeGrafter"/>
</dbReference>
<dbReference type="GO" id="GO:0042744">
    <property type="term" value="P:hydrogen peroxide catabolic process"/>
    <property type="evidence" value="ECO:0007669"/>
    <property type="project" value="TreeGrafter"/>
</dbReference>
<dbReference type="CDD" id="cd08927">
    <property type="entry name" value="Hb-alpha-like"/>
    <property type="match status" value="1"/>
</dbReference>
<dbReference type="FunFam" id="1.10.490.10:FF:000002">
    <property type="entry name" value="Hemoglobin subunit alpha"/>
    <property type="match status" value="1"/>
</dbReference>
<dbReference type="Gene3D" id="1.10.490.10">
    <property type="entry name" value="Globins"/>
    <property type="match status" value="1"/>
</dbReference>
<dbReference type="InterPro" id="IPR000971">
    <property type="entry name" value="Globin"/>
</dbReference>
<dbReference type="InterPro" id="IPR009050">
    <property type="entry name" value="Globin-like_sf"/>
</dbReference>
<dbReference type="InterPro" id="IPR012292">
    <property type="entry name" value="Globin/Proto"/>
</dbReference>
<dbReference type="InterPro" id="IPR002338">
    <property type="entry name" value="Hemoglobin_a-typ"/>
</dbReference>
<dbReference type="InterPro" id="IPR050056">
    <property type="entry name" value="Hemoglobin_oxygen_transport"/>
</dbReference>
<dbReference type="InterPro" id="IPR002339">
    <property type="entry name" value="Hemoglobin_pi"/>
</dbReference>
<dbReference type="PANTHER" id="PTHR11442">
    <property type="entry name" value="HEMOGLOBIN FAMILY MEMBER"/>
    <property type="match status" value="1"/>
</dbReference>
<dbReference type="PANTHER" id="PTHR11442:SF48">
    <property type="entry name" value="HEMOGLOBIN SUBUNIT ALPHA"/>
    <property type="match status" value="1"/>
</dbReference>
<dbReference type="Pfam" id="PF00042">
    <property type="entry name" value="Globin"/>
    <property type="match status" value="1"/>
</dbReference>
<dbReference type="PRINTS" id="PR00612">
    <property type="entry name" value="ALPHAHAEM"/>
</dbReference>
<dbReference type="PRINTS" id="PR00815">
    <property type="entry name" value="PIHAEM"/>
</dbReference>
<dbReference type="SUPFAM" id="SSF46458">
    <property type="entry name" value="Globin-like"/>
    <property type="match status" value="1"/>
</dbReference>
<dbReference type="PROSITE" id="PS01033">
    <property type="entry name" value="GLOBIN"/>
    <property type="match status" value="1"/>
</dbReference>
<proteinExistence type="evidence at protein level"/>
<reference key="1">
    <citation type="journal article" date="1982" name="Hoppe-Seyler's Z. Physiol. Chem.">
        <title>Hemoglobins, XLVI. The primary structure of the alpha-chain of armadillo (Dasypus novemcinctus, Edentata) hemoglobin.</title>
        <authorList>
            <person name="Kleinschmidt T."/>
            <person name="de Jong W.W."/>
            <person name="Braunitzer G."/>
        </authorList>
    </citation>
    <scope>PROTEIN SEQUENCE</scope>
</reference>
<accession>P01964</accession>
<sequence length="141" mass="15180">VLSAADKTHVKAFWGKVGGHAAEFGAEALERMFASFPPTKTYFSHMDLSHGSAQVKAHGKKVADALTLAVGHLDDLPGALSTLSDLHAHKLRVDPVNFKFLSHCLLVTLACHLPDDFTPAVHASMDKFMAGVSTVLVSKYR</sequence>
<comment type="function">
    <text>Involved in oxygen transport from the lung to the various peripheral tissues.</text>
</comment>
<comment type="function">
    <molecule>Hemopressin</molecule>
    <text evidence="2">Hemopressin acts as an antagonist peptide of the cannabinoid receptor CNR1. Hemopressin-binding efficiently blocks cannabinoid receptor CNR1 and subsequent signaling.</text>
</comment>
<comment type="subunit">
    <text>Heterotetramer of two alpha chains and two beta chains.</text>
</comment>
<comment type="tissue specificity">
    <text>Red blood cells.</text>
</comment>
<comment type="similarity">
    <text evidence="4">Belongs to the globin family.</text>
</comment>
<gene>
    <name type="primary">HBA</name>
</gene>
<keyword id="KW-0007">Acetylation</keyword>
<keyword id="KW-0903">Direct protein sequencing</keyword>
<keyword id="KW-0349">Heme</keyword>
<keyword id="KW-0408">Iron</keyword>
<keyword id="KW-0479">Metal-binding</keyword>
<keyword id="KW-0561">Oxygen transport</keyword>
<keyword id="KW-0597">Phosphoprotein</keyword>
<keyword id="KW-0813">Transport</keyword>
<organism>
    <name type="scientific">Dasypus novemcinctus</name>
    <name type="common">Nine-banded armadillo</name>
    <dbReference type="NCBI Taxonomy" id="9361"/>
    <lineage>
        <taxon>Eukaryota</taxon>
        <taxon>Metazoa</taxon>
        <taxon>Chordata</taxon>
        <taxon>Craniata</taxon>
        <taxon>Vertebrata</taxon>
        <taxon>Euteleostomi</taxon>
        <taxon>Mammalia</taxon>
        <taxon>Eutheria</taxon>
        <taxon>Xenarthra</taxon>
        <taxon>Cingulata</taxon>
        <taxon>Dasypodidae</taxon>
        <taxon>Dasypus</taxon>
    </lineage>
</organism>
<protein>
    <recommendedName>
        <fullName>Hemoglobin subunit alpha</fullName>
    </recommendedName>
    <alternativeName>
        <fullName>Alpha-globin</fullName>
    </alternativeName>
    <alternativeName>
        <fullName>Hemoglobin alpha chain</fullName>
    </alternativeName>
    <component>
        <recommendedName>
            <fullName evidence="2">Hemopressin</fullName>
        </recommendedName>
    </component>
</protein>
<evidence type="ECO:0000250" key="1">
    <source>
        <dbReference type="UniProtKB" id="P01942"/>
    </source>
</evidence>
<evidence type="ECO:0000250" key="2">
    <source>
        <dbReference type="UniProtKB" id="P01946"/>
    </source>
</evidence>
<evidence type="ECO:0000250" key="3">
    <source>
        <dbReference type="UniProtKB" id="P69905"/>
    </source>
</evidence>
<evidence type="ECO:0000255" key="4">
    <source>
        <dbReference type="PROSITE-ProRule" id="PRU00238"/>
    </source>
</evidence>
<name>HBA_DASNO</name>
<feature type="chain" id="PRO_0000052617" description="Hemoglobin subunit alpha">
    <location>
        <begin position="1"/>
        <end position="141"/>
    </location>
</feature>
<feature type="peptide" id="PRO_0000455864" description="Hemopressin" evidence="2">
    <location>
        <begin position="95"/>
        <end position="103"/>
    </location>
</feature>
<feature type="domain" description="Globin" evidence="4">
    <location>
        <begin position="1"/>
        <end position="141"/>
    </location>
</feature>
<feature type="binding site" evidence="4">
    <location>
        <position position="58"/>
    </location>
    <ligand>
        <name>O2</name>
        <dbReference type="ChEBI" id="CHEBI:15379"/>
    </ligand>
</feature>
<feature type="binding site" description="proximal binding residue" evidence="4">
    <location>
        <position position="87"/>
    </location>
    <ligand>
        <name>heme b</name>
        <dbReference type="ChEBI" id="CHEBI:60344"/>
    </ligand>
    <ligandPart>
        <name>Fe</name>
        <dbReference type="ChEBI" id="CHEBI:18248"/>
    </ligandPart>
</feature>
<feature type="modified residue" description="Phosphoserine" evidence="3">
    <location>
        <position position="3"/>
    </location>
</feature>
<feature type="modified residue" description="N6-succinyllysine" evidence="1">
    <location>
        <position position="7"/>
    </location>
</feature>
<feature type="modified residue" description="Phosphothreonine" evidence="3">
    <location>
        <position position="8"/>
    </location>
</feature>
<feature type="modified residue" description="N6-succinyllysine" evidence="1">
    <location>
        <position position="11"/>
    </location>
</feature>
<feature type="modified residue" description="N6-acetyllysine; alternate" evidence="3">
    <location>
        <position position="16"/>
    </location>
</feature>
<feature type="modified residue" description="N6-succinyllysine; alternate" evidence="1">
    <location>
        <position position="16"/>
    </location>
</feature>
<feature type="modified residue" description="Phosphoserine" evidence="3">
    <location>
        <position position="35"/>
    </location>
</feature>
<feature type="modified residue" description="N6-succinyllysine" evidence="1">
    <location>
        <position position="40"/>
    </location>
</feature>
<feature type="modified residue" description="Phosphoserine" evidence="3">
    <location>
        <position position="49"/>
    </location>
</feature>
<feature type="modified residue" description="Phosphoserine" evidence="1">
    <location>
        <position position="102"/>
    </location>
</feature>
<feature type="modified residue" description="Phosphothreonine" evidence="1">
    <location>
        <position position="108"/>
    </location>
</feature>
<feature type="modified residue" description="Phosphoserine" evidence="1">
    <location>
        <position position="124"/>
    </location>
</feature>
<feature type="modified residue" description="Phosphothreonine" evidence="1">
    <location>
        <position position="134"/>
    </location>
</feature>
<feature type="modified residue" description="Phosphoserine" evidence="1">
    <location>
        <position position="138"/>
    </location>
</feature>